<protein>
    <recommendedName>
        <fullName evidence="2">Amaryllin</fullName>
    </recommendedName>
</protein>
<dbReference type="GO" id="GO:0050832">
    <property type="term" value="P:defense response to fungus"/>
    <property type="evidence" value="ECO:0000314"/>
    <property type="project" value="UniProtKB"/>
</dbReference>
<dbReference type="GO" id="GO:0031640">
    <property type="term" value="P:killing of cells of another organism"/>
    <property type="evidence" value="ECO:0007669"/>
    <property type="project" value="UniProtKB-KW"/>
</dbReference>
<sequence>QKIQEIDLQTYLQPQ</sequence>
<keyword id="KW-0929">Antimicrobial</keyword>
<keyword id="KW-0903">Direct protein sequencing</keyword>
<keyword id="KW-0295">Fungicide</keyword>
<keyword id="KW-0611">Plant defense</keyword>
<evidence type="ECO:0000269" key="1">
    <source>
    </source>
</evidence>
<evidence type="ECO:0000303" key="2">
    <source>
    </source>
</evidence>
<evidence type="ECO:0000305" key="3"/>
<feature type="chain" id="PRO_0000399440" description="Amaryllin">
    <location>
        <begin position="1"/>
        <end position="15" status="greater than"/>
    </location>
</feature>
<feature type="non-terminal residue" evidence="2">
    <location>
        <position position="15"/>
    </location>
</feature>
<comment type="function">
    <text evidence="1">Has antifungal activity against A.flavus and F.oxysporum.</text>
</comment>
<organism>
    <name type="scientific">Amaryllis belladonna</name>
    <name type="common">Naked lady lily</name>
    <dbReference type="NCBI Taxonomy" id="51432"/>
    <lineage>
        <taxon>Eukaryota</taxon>
        <taxon>Viridiplantae</taxon>
        <taxon>Streptophyta</taxon>
        <taxon>Embryophyta</taxon>
        <taxon>Tracheophyta</taxon>
        <taxon>Spermatophyta</taxon>
        <taxon>Magnoliopsida</taxon>
        <taxon>Liliopsida</taxon>
        <taxon>Asparagales</taxon>
        <taxon>Amaryllidaceae</taxon>
        <taxon>Amaryllidoideae</taxon>
        <taxon>Amaryllis</taxon>
    </lineage>
</organism>
<proteinExistence type="evidence at protein level"/>
<reference evidence="3" key="1">
    <citation type="journal article" date="2009" name="Acta Crystallogr. F">
        <title>Isolation, purification, crystallization and preliminary crystallographic studies of amaryllin, a plant pathogenesis-related protein from Amaryllis belladonna.</title>
        <authorList>
            <person name="Kumar S."/>
            <person name="Singh N."/>
            <person name="Sinha M."/>
            <person name="Kaur P."/>
            <person name="Srinivasan A."/>
            <person name="Sharma S."/>
            <person name="Singh T.P."/>
        </authorList>
    </citation>
    <scope>PROTEIN SEQUENCE</scope>
    <scope>FUNCTION</scope>
    <scope>X-RAY CRYSTALLOGRAPHY (2.7 ANGSTROMS)</scope>
    <source>
        <tissue evidence="1">Bulb</tissue>
    </source>
</reference>
<accession>P86781</accession>
<name>AMARY_AMABE</name>